<gene>
    <name evidence="1" type="primary">rpmD</name>
    <name type="ordered locus">BMA10229_A1942</name>
</gene>
<dbReference type="EMBL" id="CP000546">
    <property type="protein sequence ID" value="ABN03296.1"/>
    <property type="molecule type" value="Genomic_DNA"/>
</dbReference>
<dbReference type="RefSeq" id="WP_004202755.1">
    <property type="nucleotide sequence ID" value="NC_008836.1"/>
</dbReference>
<dbReference type="SMR" id="A2S7J4"/>
<dbReference type="GeneID" id="93061814"/>
<dbReference type="KEGG" id="bml:BMA10229_A1942"/>
<dbReference type="HOGENOM" id="CLU_131047_1_4_4"/>
<dbReference type="Proteomes" id="UP000002283">
    <property type="component" value="Chromosome I"/>
</dbReference>
<dbReference type="GO" id="GO:0022625">
    <property type="term" value="C:cytosolic large ribosomal subunit"/>
    <property type="evidence" value="ECO:0007669"/>
    <property type="project" value="TreeGrafter"/>
</dbReference>
<dbReference type="GO" id="GO:0003735">
    <property type="term" value="F:structural constituent of ribosome"/>
    <property type="evidence" value="ECO:0007669"/>
    <property type="project" value="InterPro"/>
</dbReference>
<dbReference type="GO" id="GO:0006412">
    <property type="term" value="P:translation"/>
    <property type="evidence" value="ECO:0007669"/>
    <property type="project" value="UniProtKB-UniRule"/>
</dbReference>
<dbReference type="CDD" id="cd01658">
    <property type="entry name" value="Ribosomal_L30"/>
    <property type="match status" value="1"/>
</dbReference>
<dbReference type="FunFam" id="3.30.1390.20:FF:000001">
    <property type="entry name" value="50S ribosomal protein L30"/>
    <property type="match status" value="1"/>
</dbReference>
<dbReference type="Gene3D" id="3.30.1390.20">
    <property type="entry name" value="Ribosomal protein L30, ferredoxin-like fold domain"/>
    <property type="match status" value="1"/>
</dbReference>
<dbReference type="HAMAP" id="MF_01371_B">
    <property type="entry name" value="Ribosomal_uL30_B"/>
    <property type="match status" value="1"/>
</dbReference>
<dbReference type="InterPro" id="IPR036919">
    <property type="entry name" value="Ribo_uL30_ferredoxin-like_sf"/>
</dbReference>
<dbReference type="InterPro" id="IPR005996">
    <property type="entry name" value="Ribosomal_uL30_bac-type"/>
</dbReference>
<dbReference type="InterPro" id="IPR016082">
    <property type="entry name" value="Ribosomal_uL30_ferredoxin-like"/>
</dbReference>
<dbReference type="NCBIfam" id="TIGR01308">
    <property type="entry name" value="rpmD_bact"/>
    <property type="match status" value="1"/>
</dbReference>
<dbReference type="PANTHER" id="PTHR15892:SF2">
    <property type="entry name" value="LARGE RIBOSOMAL SUBUNIT PROTEIN UL30M"/>
    <property type="match status" value="1"/>
</dbReference>
<dbReference type="PANTHER" id="PTHR15892">
    <property type="entry name" value="MITOCHONDRIAL RIBOSOMAL PROTEIN L30"/>
    <property type="match status" value="1"/>
</dbReference>
<dbReference type="Pfam" id="PF00327">
    <property type="entry name" value="Ribosomal_L30"/>
    <property type="match status" value="1"/>
</dbReference>
<dbReference type="PIRSF" id="PIRSF002211">
    <property type="entry name" value="Ribosomal_L30_bac-type"/>
    <property type="match status" value="1"/>
</dbReference>
<dbReference type="SUPFAM" id="SSF55129">
    <property type="entry name" value="Ribosomal protein L30p/L7e"/>
    <property type="match status" value="1"/>
</dbReference>
<proteinExistence type="inferred from homology"/>
<feature type="chain" id="PRO_1000056019" description="Large ribosomal subunit protein uL30">
    <location>
        <begin position="1"/>
        <end position="60"/>
    </location>
</feature>
<keyword id="KW-0687">Ribonucleoprotein</keyword>
<keyword id="KW-0689">Ribosomal protein</keyword>
<accession>A2S7J4</accession>
<organism>
    <name type="scientific">Burkholderia mallei (strain NCTC 10229)</name>
    <dbReference type="NCBI Taxonomy" id="412022"/>
    <lineage>
        <taxon>Bacteria</taxon>
        <taxon>Pseudomonadati</taxon>
        <taxon>Pseudomonadota</taxon>
        <taxon>Betaproteobacteria</taxon>
        <taxon>Burkholderiales</taxon>
        <taxon>Burkholderiaceae</taxon>
        <taxon>Burkholderia</taxon>
        <taxon>pseudomallei group</taxon>
    </lineage>
</organism>
<evidence type="ECO:0000255" key="1">
    <source>
        <dbReference type="HAMAP-Rule" id="MF_01371"/>
    </source>
</evidence>
<evidence type="ECO:0000305" key="2"/>
<protein>
    <recommendedName>
        <fullName evidence="1">Large ribosomal subunit protein uL30</fullName>
    </recommendedName>
    <alternativeName>
        <fullName evidence="2">50S ribosomal protein L30</fullName>
    </alternativeName>
</protein>
<name>RL30_BURM9</name>
<reference key="1">
    <citation type="journal article" date="2010" name="Genome Biol. Evol.">
        <title>Continuing evolution of Burkholderia mallei through genome reduction and large-scale rearrangements.</title>
        <authorList>
            <person name="Losada L."/>
            <person name="Ronning C.M."/>
            <person name="DeShazer D."/>
            <person name="Woods D."/>
            <person name="Fedorova N."/>
            <person name="Kim H.S."/>
            <person name="Shabalina S.A."/>
            <person name="Pearson T.R."/>
            <person name="Brinkac L."/>
            <person name="Tan P."/>
            <person name="Nandi T."/>
            <person name="Crabtree J."/>
            <person name="Badger J."/>
            <person name="Beckstrom-Sternberg S."/>
            <person name="Saqib M."/>
            <person name="Schutzer S.E."/>
            <person name="Keim P."/>
            <person name="Nierman W.C."/>
        </authorList>
    </citation>
    <scope>NUCLEOTIDE SEQUENCE [LARGE SCALE GENOMIC DNA]</scope>
    <source>
        <strain>NCTC 10229</strain>
    </source>
</reference>
<sequence length="60" mass="6621">MSEKTVKVQLVKSLIGTRESHRATVRGLGLRRLNSVSELQDTPAVRGMINKVSYLVKVIG</sequence>
<comment type="subunit">
    <text evidence="1">Part of the 50S ribosomal subunit.</text>
</comment>
<comment type="similarity">
    <text evidence="1">Belongs to the universal ribosomal protein uL30 family.</text>
</comment>